<gene>
    <name evidence="1" type="primary">purM</name>
    <name type="ordered locus">Swoo_2744</name>
</gene>
<feature type="chain" id="PRO_1000193043" description="Phosphoribosylformylglycinamidine cyclo-ligase">
    <location>
        <begin position="1"/>
        <end position="345"/>
    </location>
</feature>
<reference key="1">
    <citation type="submission" date="2008-02" db="EMBL/GenBank/DDBJ databases">
        <title>Complete sequence of Shewanella woodyi ATCC 51908.</title>
        <authorList>
            <consortium name="US DOE Joint Genome Institute"/>
            <person name="Copeland A."/>
            <person name="Lucas S."/>
            <person name="Lapidus A."/>
            <person name="Glavina del Rio T."/>
            <person name="Dalin E."/>
            <person name="Tice H."/>
            <person name="Bruce D."/>
            <person name="Goodwin L."/>
            <person name="Pitluck S."/>
            <person name="Sims D."/>
            <person name="Brettin T."/>
            <person name="Detter J.C."/>
            <person name="Han C."/>
            <person name="Kuske C.R."/>
            <person name="Schmutz J."/>
            <person name="Larimer F."/>
            <person name="Land M."/>
            <person name="Hauser L."/>
            <person name="Kyrpides N."/>
            <person name="Lykidis A."/>
            <person name="Zhao J.-S."/>
            <person name="Richardson P."/>
        </authorList>
    </citation>
    <scope>NUCLEOTIDE SEQUENCE [LARGE SCALE GENOMIC DNA]</scope>
    <source>
        <strain>ATCC 51908 / MS32</strain>
    </source>
</reference>
<protein>
    <recommendedName>
        <fullName evidence="1">Phosphoribosylformylglycinamidine cyclo-ligase</fullName>
        <ecNumber evidence="1">6.3.3.1</ecNumber>
    </recommendedName>
    <alternativeName>
        <fullName evidence="1">AIR synthase</fullName>
    </alternativeName>
    <alternativeName>
        <fullName evidence="1">AIRS</fullName>
    </alternativeName>
    <alternativeName>
        <fullName evidence="1">Phosphoribosyl-aminoimidazole synthetase</fullName>
    </alternativeName>
</protein>
<comment type="catalytic activity">
    <reaction evidence="1">
        <text>2-formamido-N(1)-(5-O-phospho-beta-D-ribosyl)acetamidine + ATP = 5-amino-1-(5-phospho-beta-D-ribosyl)imidazole + ADP + phosphate + H(+)</text>
        <dbReference type="Rhea" id="RHEA:23032"/>
        <dbReference type="ChEBI" id="CHEBI:15378"/>
        <dbReference type="ChEBI" id="CHEBI:30616"/>
        <dbReference type="ChEBI" id="CHEBI:43474"/>
        <dbReference type="ChEBI" id="CHEBI:137981"/>
        <dbReference type="ChEBI" id="CHEBI:147287"/>
        <dbReference type="ChEBI" id="CHEBI:456216"/>
        <dbReference type="EC" id="6.3.3.1"/>
    </reaction>
</comment>
<comment type="pathway">
    <text evidence="1">Purine metabolism; IMP biosynthesis via de novo pathway; 5-amino-1-(5-phospho-D-ribosyl)imidazole from N(2)-formyl-N(1)-(5-phospho-D-ribosyl)glycinamide: step 2/2.</text>
</comment>
<comment type="subcellular location">
    <subcellularLocation>
        <location evidence="1">Cytoplasm</location>
    </subcellularLocation>
</comment>
<comment type="similarity">
    <text evidence="1">Belongs to the AIR synthase family.</text>
</comment>
<organism>
    <name type="scientific">Shewanella woodyi (strain ATCC 51908 / MS32)</name>
    <dbReference type="NCBI Taxonomy" id="392500"/>
    <lineage>
        <taxon>Bacteria</taxon>
        <taxon>Pseudomonadati</taxon>
        <taxon>Pseudomonadota</taxon>
        <taxon>Gammaproteobacteria</taxon>
        <taxon>Alteromonadales</taxon>
        <taxon>Shewanellaceae</taxon>
        <taxon>Shewanella</taxon>
    </lineage>
</organism>
<sequence length="345" mass="37033">MSTPTQLSYKDAGVDIDAGNALVDNIKTAVKRTHRPEVMGNLGGFGALCELPTKYKHPVLVSGTDGVGTKLRLAIDYKKHDTVGIDLVAMCSNDLIVSGAEPLFFLDYYATGKLDVDAATAVVKGIAEGCVQSGCALIGGETAEMPGMYEGDDYDLAGFCVGVVEKEEIIDGTKVVAGDSLIALGASGPHSNGFSLIRKVLEVSGANPEQELEGKALIDHLLEPTKIYVKSLLKLLEQTEVHAMAHITGGGFWENIPRVLPDDCKAVIQGDSWQWPSIFNWLMENGNIAEFEMYRTFNCGVGMVVALPSDKVEAALTLLNAEGEKAWLIGEIAKRDDSEEQVEIL</sequence>
<evidence type="ECO:0000255" key="1">
    <source>
        <dbReference type="HAMAP-Rule" id="MF_00741"/>
    </source>
</evidence>
<dbReference type="EC" id="6.3.3.1" evidence="1"/>
<dbReference type="EMBL" id="CP000961">
    <property type="protein sequence ID" value="ACA87020.1"/>
    <property type="molecule type" value="Genomic_DNA"/>
</dbReference>
<dbReference type="RefSeq" id="WP_012325356.1">
    <property type="nucleotide sequence ID" value="NC_010506.1"/>
</dbReference>
<dbReference type="SMR" id="B1KIG9"/>
<dbReference type="STRING" id="392500.Swoo_2744"/>
<dbReference type="KEGG" id="swd:Swoo_2744"/>
<dbReference type="eggNOG" id="COG0150">
    <property type="taxonomic scope" value="Bacteria"/>
</dbReference>
<dbReference type="HOGENOM" id="CLU_047116_0_0_6"/>
<dbReference type="UniPathway" id="UPA00074">
    <property type="reaction ID" value="UER00129"/>
</dbReference>
<dbReference type="Proteomes" id="UP000002168">
    <property type="component" value="Chromosome"/>
</dbReference>
<dbReference type="GO" id="GO:0005829">
    <property type="term" value="C:cytosol"/>
    <property type="evidence" value="ECO:0007669"/>
    <property type="project" value="TreeGrafter"/>
</dbReference>
<dbReference type="GO" id="GO:0005524">
    <property type="term" value="F:ATP binding"/>
    <property type="evidence" value="ECO:0007669"/>
    <property type="project" value="UniProtKB-KW"/>
</dbReference>
<dbReference type="GO" id="GO:0004637">
    <property type="term" value="F:phosphoribosylamine-glycine ligase activity"/>
    <property type="evidence" value="ECO:0007669"/>
    <property type="project" value="TreeGrafter"/>
</dbReference>
<dbReference type="GO" id="GO:0004641">
    <property type="term" value="F:phosphoribosylformylglycinamidine cyclo-ligase activity"/>
    <property type="evidence" value="ECO:0007669"/>
    <property type="project" value="UniProtKB-UniRule"/>
</dbReference>
<dbReference type="GO" id="GO:0006189">
    <property type="term" value="P:'de novo' IMP biosynthetic process"/>
    <property type="evidence" value="ECO:0007669"/>
    <property type="project" value="UniProtKB-UniRule"/>
</dbReference>
<dbReference type="GO" id="GO:0046084">
    <property type="term" value="P:adenine biosynthetic process"/>
    <property type="evidence" value="ECO:0007669"/>
    <property type="project" value="TreeGrafter"/>
</dbReference>
<dbReference type="CDD" id="cd02196">
    <property type="entry name" value="PurM"/>
    <property type="match status" value="1"/>
</dbReference>
<dbReference type="FunFam" id="3.30.1330.10:FF:000001">
    <property type="entry name" value="Phosphoribosylformylglycinamidine cyclo-ligase"/>
    <property type="match status" value="1"/>
</dbReference>
<dbReference type="FunFam" id="3.90.650.10:FF:000001">
    <property type="entry name" value="Phosphoribosylformylglycinamidine cyclo-ligase"/>
    <property type="match status" value="1"/>
</dbReference>
<dbReference type="Gene3D" id="3.90.650.10">
    <property type="entry name" value="PurM-like C-terminal domain"/>
    <property type="match status" value="1"/>
</dbReference>
<dbReference type="Gene3D" id="3.30.1330.10">
    <property type="entry name" value="PurM-like, N-terminal domain"/>
    <property type="match status" value="1"/>
</dbReference>
<dbReference type="HAMAP" id="MF_00741">
    <property type="entry name" value="AIRS"/>
    <property type="match status" value="1"/>
</dbReference>
<dbReference type="InterPro" id="IPR010918">
    <property type="entry name" value="PurM-like_C_dom"/>
</dbReference>
<dbReference type="InterPro" id="IPR036676">
    <property type="entry name" value="PurM-like_C_sf"/>
</dbReference>
<dbReference type="InterPro" id="IPR016188">
    <property type="entry name" value="PurM-like_N"/>
</dbReference>
<dbReference type="InterPro" id="IPR036921">
    <property type="entry name" value="PurM-like_N_sf"/>
</dbReference>
<dbReference type="InterPro" id="IPR004733">
    <property type="entry name" value="PurM_cligase"/>
</dbReference>
<dbReference type="NCBIfam" id="TIGR00878">
    <property type="entry name" value="purM"/>
    <property type="match status" value="1"/>
</dbReference>
<dbReference type="PANTHER" id="PTHR10520:SF12">
    <property type="entry name" value="TRIFUNCTIONAL PURINE BIOSYNTHETIC PROTEIN ADENOSINE-3"/>
    <property type="match status" value="1"/>
</dbReference>
<dbReference type="PANTHER" id="PTHR10520">
    <property type="entry name" value="TRIFUNCTIONAL PURINE BIOSYNTHETIC PROTEIN ADENOSINE-3-RELATED"/>
    <property type="match status" value="1"/>
</dbReference>
<dbReference type="Pfam" id="PF00586">
    <property type="entry name" value="AIRS"/>
    <property type="match status" value="1"/>
</dbReference>
<dbReference type="Pfam" id="PF02769">
    <property type="entry name" value="AIRS_C"/>
    <property type="match status" value="1"/>
</dbReference>
<dbReference type="SUPFAM" id="SSF56042">
    <property type="entry name" value="PurM C-terminal domain-like"/>
    <property type="match status" value="1"/>
</dbReference>
<dbReference type="SUPFAM" id="SSF55326">
    <property type="entry name" value="PurM N-terminal domain-like"/>
    <property type="match status" value="1"/>
</dbReference>
<keyword id="KW-0067">ATP-binding</keyword>
<keyword id="KW-0963">Cytoplasm</keyword>
<keyword id="KW-0436">Ligase</keyword>
<keyword id="KW-0547">Nucleotide-binding</keyword>
<keyword id="KW-0658">Purine biosynthesis</keyword>
<keyword id="KW-1185">Reference proteome</keyword>
<name>PUR5_SHEWM</name>
<proteinExistence type="inferred from homology"/>
<accession>B1KIG9</accession>